<organism>
    <name type="scientific">Geobacillus sp. (strain WCH70)</name>
    <dbReference type="NCBI Taxonomy" id="471223"/>
    <lineage>
        <taxon>Bacteria</taxon>
        <taxon>Bacillati</taxon>
        <taxon>Bacillota</taxon>
        <taxon>Bacilli</taxon>
        <taxon>Bacillales</taxon>
        <taxon>Anoxybacillaceae</taxon>
        <taxon>Geobacillus</taxon>
    </lineage>
</organism>
<evidence type="ECO:0000255" key="1">
    <source>
        <dbReference type="HAMAP-Rule" id="MF_00127"/>
    </source>
</evidence>
<reference key="1">
    <citation type="submission" date="2009-06" db="EMBL/GenBank/DDBJ databases">
        <title>Complete sequence of chromosome of Geopacillus sp. WCH70.</title>
        <authorList>
            <consortium name="US DOE Joint Genome Institute"/>
            <person name="Lucas S."/>
            <person name="Copeland A."/>
            <person name="Lapidus A."/>
            <person name="Glavina del Rio T."/>
            <person name="Dalin E."/>
            <person name="Tice H."/>
            <person name="Bruce D."/>
            <person name="Goodwin L."/>
            <person name="Pitluck S."/>
            <person name="Chertkov O."/>
            <person name="Brettin T."/>
            <person name="Detter J.C."/>
            <person name="Han C."/>
            <person name="Larimer F."/>
            <person name="Land M."/>
            <person name="Hauser L."/>
            <person name="Kyrpides N."/>
            <person name="Mikhailova N."/>
            <person name="Brumm P."/>
            <person name="Mead D.A."/>
            <person name="Richardson P."/>
        </authorList>
    </citation>
    <scope>NUCLEOTIDE SEQUENCE [LARGE SCALE GENOMIC DNA]</scope>
    <source>
        <strain>WCH70</strain>
    </source>
</reference>
<keyword id="KW-0030">Aminoacyl-tRNA synthetase</keyword>
<keyword id="KW-0067">ATP-binding</keyword>
<keyword id="KW-0963">Cytoplasm</keyword>
<keyword id="KW-0436">Ligase</keyword>
<keyword id="KW-0547">Nucleotide-binding</keyword>
<keyword id="KW-0648">Protein biosynthesis</keyword>
<accession>C5D510</accession>
<sequence>MAFQIPRGTQDILPGEVEKWQYVEKIARDICKRYNYHEIRTPIFEHTELFLRGVGDTTDIVQKEMYTFEDRAGRSMTLRPEGTAPVVRSFVENKMYGNPNQPIKLYYIGPMFRYERPQAGRFRQFVQFGVEAIGSNDPAIDAEVIAMAMELYRSLGLKKLRLVINSLGDVETRKAHRQALIDHFKSRIHELCEDCQVRLEKNPLRILDCKKDRDHELMATAPSILDYLNDESRHYFEKVKAYLTKLGIPFEVDPRLVRGLDYYHHTTFEIMSDAEGFGAITTLCGGGRYSGLVQEIGGPETPGIGFALSIERLLAALEAEGITLPISEGIDCYVVAVGEKAKDESILLVHKLRKAGIVADKDYQDRKIKAQLKSADRLNAKFVAILGDDELAKEVINIKEMSTGEQTEVPLHSVVDYLKERLS</sequence>
<proteinExistence type="inferred from homology"/>
<dbReference type="EC" id="6.1.1.21" evidence="1"/>
<dbReference type="EMBL" id="CP001638">
    <property type="protein sequence ID" value="ACS25202.1"/>
    <property type="molecule type" value="Genomic_DNA"/>
</dbReference>
<dbReference type="SMR" id="C5D510"/>
<dbReference type="STRING" id="471223.GWCH70_2507"/>
<dbReference type="KEGG" id="gwc:GWCH70_2507"/>
<dbReference type="eggNOG" id="COG0124">
    <property type="taxonomic scope" value="Bacteria"/>
</dbReference>
<dbReference type="HOGENOM" id="CLU_025113_1_1_9"/>
<dbReference type="OrthoDB" id="9800814at2"/>
<dbReference type="GO" id="GO:0005737">
    <property type="term" value="C:cytoplasm"/>
    <property type="evidence" value="ECO:0007669"/>
    <property type="project" value="UniProtKB-SubCell"/>
</dbReference>
<dbReference type="GO" id="GO:0005524">
    <property type="term" value="F:ATP binding"/>
    <property type="evidence" value="ECO:0007669"/>
    <property type="project" value="UniProtKB-UniRule"/>
</dbReference>
<dbReference type="GO" id="GO:0140096">
    <property type="term" value="F:catalytic activity, acting on a protein"/>
    <property type="evidence" value="ECO:0007669"/>
    <property type="project" value="UniProtKB-ARBA"/>
</dbReference>
<dbReference type="GO" id="GO:0004821">
    <property type="term" value="F:histidine-tRNA ligase activity"/>
    <property type="evidence" value="ECO:0007669"/>
    <property type="project" value="UniProtKB-UniRule"/>
</dbReference>
<dbReference type="GO" id="GO:0016740">
    <property type="term" value="F:transferase activity"/>
    <property type="evidence" value="ECO:0007669"/>
    <property type="project" value="UniProtKB-ARBA"/>
</dbReference>
<dbReference type="GO" id="GO:0006427">
    <property type="term" value="P:histidyl-tRNA aminoacylation"/>
    <property type="evidence" value="ECO:0007669"/>
    <property type="project" value="UniProtKB-UniRule"/>
</dbReference>
<dbReference type="CDD" id="cd00773">
    <property type="entry name" value="HisRS-like_core"/>
    <property type="match status" value="1"/>
</dbReference>
<dbReference type="CDD" id="cd00859">
    <property type="entry name" value="HisRS_anticodon"/>
    <property type="match status" value="1"/>
</dbReference>
<dbReference type="FunFam" id="3.30.930.10:FF:000005">
    <property type="entry name" value="Histidine--tRNA ligase"/>
    <property type="match status" value="1"/>
</dbReference>
<dbReference type="Gene3D" id="3.40.50.800">
    <property type="entry name" value="Anticodon-binding domain"/>
    <property type="match status" value="1"/>
</dbReference>
<dbReference type="Gene3D" id="3.30.930.10">
    <property type="entry name" value="Bira Bifunctional Protein, Domain 2"/>
    <property type="match status" value="1"/>
</dbReference>
<dbReference type="HAMAP" id="MF_00127">
    <property type="entry name" value="His_tRNA_synth"/>
    <property type="match status" value="1"/>
</dbReference>
<dbReference type="InterPro" id="IPR006195">
    <property type="entry name" value="aa-tRNA-synth_II"/>
</dbReference>
<dbReference type="InterPro" id="IPR045864">
    <property type="entry name" value="aa-tRNA-synth_II/BPL/LPL"/>
</dbReference>
<dbReference type="InterPro" id="IPR004154">
    <property type="entry name" value="Anticodon-bd"/>
</dbReference>
<dbReference type="InterPro" id="IPR036621">
    <property type="entry name" value="Anticodon-bd_dom_sf"/>
</dbReference>
<dbReference type="InterPro" id="IPR015807">
    <property type="entry name" value="His-tRNA-ligase"/>
</dbReference>
<dbReference type="InterPro" id="IPR041715">
    <property type="entry name" value="HisRS-like_core"/>
</dbReference>
<dbReference type="InterPro" id="IPR004516">
    <property type="entry name" value="HisRS/HisZ"/>
</dbReference>
<dbReference type="InterPro" id="IPR033656">
    <property type="entry name" value="HisRS_anticodon"/>
</dbReference>
<dbReference type="NCBIfam" id="TIGR00442">
    <property type="entry name" value="hisS"/>
    <property type="match status" value="1"/>
</dbReference>
<dbReference type="PANTHER" id="PTHR43707:SF1">
    <property type="entry name" value="HISTIDINE--TRNA LIGASE, MITOCHONDRIAL-RELATED"/>
    <property type="match status" value="1"/>
</dbReference>
<dbReference type="PANTHER" id="PTHR43707">
    <property type="entry name" value="HISTIDYL-TRNA SYNTHETASE"/>
    <property type="match status" value="1"/>
</dbReference>
<dbReference type="Pfam" id="PF03129">
    <property type="entry name" value="HGTP_anticodon"/>
    <property type="match status" value="1"/>
</dbReference>
<dbReference type="Pfam" id="PF13393">
    <property type="entry name" value="tRNA-synt_His"/>
    <property type="match status" value="1"/>
</dbReference>
<dbReference type="PIRSF" id="PIRSF001549">
    <property type="entry name" value="His-tRNA_synth"/>
    <property type="match status" value="1"/>
</dbReference>
<dbReference type="SUPFAM" id="SSF52954">
    <property type="entry name" value="Class II aaRS ABD-related"/>
    <property type="match status" value="1"/>
</dbReference>
<dbReference type="SUPFAM" id="SSF55681">
    <property type="entry name" value="Class II aaRS and biotin synthetases"/>
    <property type="match status" value="1"/>
</dbReference>
<dbReference type="PROSITE" id="PS50862">
    <property type="entry name" value="AA_TRNA_LIGASE_II"/>
    <property type="match status" value="1"/>
</dbReference>
<protein>
    <recommendedName>
        <fullName evidence="1">Histidine--tRNA ligase</fullName>
        <ecNumber evidence="1">6.1.1.21</ecNumber>
    </recommendedName>
    <alternativeName>
        <fullName evidence="1">Histidyl-tRNA synthetase</fullName>
        <shortName evidence="1">HisRS</shortName>
    </alternativeName>
</protein>
<gene>
    <name evidence="1" type="primary">hisS</name>
    <name type="ordered locus">GWCH70_2507</name>
</gene>
<name>SYH_GEOSW</name>
<feature type="chain" id="PRO_1000203138" description="Histidine--tRNA ligase">
    <location>
        <begin position="1"/>
        <end position="423"/>
    </location>
</feature>
<comment type="catalytic activity">
    <reaction evidence="1">
        <text>tRNA(His) + L-histidine + ATP = L-histidyl-tRNA(His) + AMP + diphosphate + H(+)</text>
        <dbReference type="Rhea" id="RHEA:17313"/>
        <dbReference type="Rhea" id="RHEA-COMP:9665"/>
        <dbReference type="Rhea" id="RHEA-COMP:9689"/>
        <dbReference type="ChEBI" id="CHEBI:15378"/>
        <dbReference type="ChEBI" id="CHEBI:30616"/>
        <dbReference type="ChEBI" id="CHEBI:33019"/>
        <dbReference type="ChEBI" id="CHEBI:57595"/>
        <dbReference type="ChEBI" id="CHEBI:78442"/>
        <dbReference type="ChEBI" id="CHEBI:78527"/>
        <dbReference type="ChEBI" id="CHEBI:456215"/>
        <dbReference type="EC" id="6.1.1.21"/>
    </reaction>
</comment>
<comment type="subunit">
    <text evidence="1">Homodimer.</text>
</comment>
<comment type="subcellular location">
    <subcellularLocation>
        <location evidence="1">Cytoplasm</location>
    </subcellularLocation>
</comment>
<comment type="similarity">
    <text evidence="1">Belongs to the class-II aminoacyl-tRNA synthetase family.</text>
</comment>